<comment type="function">
    <text evidence="1">Catalyzes the NADPH-dependent rearrangement and reduction of 1-deoxy-D-xylulose-5-phosphate (DXP) to 2-C-methyl-D-erythritol 4-phosphate (MEP).</text>
</comment>
<comment type="catalytic activity">
    <reaction evidence="1">
        <text>2-C-methyl-D-erythritol 4-phosphate + NADP(+) = 1-deoxy-D-xylulose 5-phosphate + NADPH + H(+)</text>
        <dbReference type="Rhea" id="RHEA:13717"/>
        <dbReference type="ChEBI" id="CHEBI:15378"/>
        <dbReference type="ChEBI" id="CHEBI:57783"/>
        <dbReference type="ChEBI" id="CHEBI:57792"/>
        <dbReference type="ChEBI" id="CHEBI:58262"/>
        <dbReference type="ChEBI" id="CHEBI:58349"/>
        <dbReference type="EC" id="1.1.1.267"/>
    </reaction>
    <physiologicalReaction direction="right-to-left" evidence="1">
        <dbReference type="Rhea" id="RHEA:13719"/>
    </physiologicalReaction>
</comment>
<comment type="cofactor">
    <cofactor evidence="1">
        <name>Mg(2+)</name>
        <dbReference type="ChEBI" id="CHEBI:18420"/>
    </cofactor>
    <cofactor evidence="1">
        <name>Mn(2+)</name>
        <dbReference type="ChEBI" id="CHEBI:29035"/>
    </cofactor>
</comment>
<comment type="pathway">
    <text evidence="1">Isoprenoid biosynthesis; isopentenyl diphosphate biosynthesis via DXP pathway; isopentenyl diphosphate from 1-deoxy-D-xylulose 5-phosphate: step 1/6.</text>
</comment>
<comment type="similarity">
    <text evidence="1">Belongs to the DXR family.</text>
</comment>
<accession>B9KA80</accession>
<sequence>MEERTLVILGVTGSIGTQTLDVLRKIEGIRLVGISFHTNVELAKKIVKEFQVENVVVTGDVSFECSAKVWKGPHALEDMMEALKPDITMVAVSGFSGLRAVLAALEHSRRVCLANKESLVCGGFLVKRKLKEKSVELIPVDSEHSAIFQVIEPDVQKIVLTASGGALRDWDLEKIETATPNDVLKHPVWSMGARITVDSATMVNKAFEVLEAMELFDLPFEKIDVKIHREGLVHGVVILPDGNVKMVFSPPDMRIPISYSLLYPKRAALGSFSLETMKISFDPVNPERYPAFFLLNQIKDSYALRTAFNAADEVAVDAFLKGKIKFGGIHRVIERTLERIDGYPEPENLEEVEQIHDEARKIAERVTEWLSSISS</sequence>
<dbReference type="EC" id="1.1.1.267" evidence="1"/>
<dbReference type="EMBL" id="CP000916">
    <property type="protein sequence ID" value="ACM23863.1"/>
    <property type="molecule type" value="Genomic_DNA"/>
</dbReference>
<dbReference type="RefSeq" id="WP_015920101.1">
    <property type="nucleotide sequence ID" value="NC_011978.1"/>
</dbReference>
<dbReference type="SMR" id="B9KA80"/>
<dbReference type="STRING" id="309803.CTN_1687"/>
<dbReference type="KEGG" id="tna:CTN_1687"/>
<dbReference type="eggNOG" id="COG0743">
    <property type="taxonomic scope" value="Bacteria"/>
</dbReference>
<dbReference type="HOGENOM" id="CLU_035714_0_0_0"/>
<dbReference type="UniPathway" id="UPA00056">
    <property type="reaction ID" value="UER00092"/>
</dbReference>
<dbReference type="Proteomes" id="UP000000445">
    <property type="component" value="Chromosome"/>
</dbReference>
<dbReference type="GO" id="GO:0030604">
    <property type="term" value="F:1-deoxy-D-xylulose-5-phosphate reductoisomerase activity"/>
    <property type="evidence" value="ECO:0007669"/>
    <property type="project" value="UniProtKB-UniRule"/>
</dbReference>
<dbReference type="GO" id="GO:0030145">
    <property type="term" value="F:manganese ion binding"/>
    <property type="evidence" value="ECO:0007669"/>
    <property type="project" value="TreeGrafter"/>
</dbReference>
<dbReference type="GO" id="GO:0070402">
    <property type="term" value="F:NADPH binding"/>
    <property type="evidence" value="ECO:0007669"/>
    <property type="project" value="InterPro"/>
</dbReference>
<dbReference type="GO" id="GO:0051484">
    <property type="term" value="P:isopentenyl diphosphate biosynthetic process, methylerythritol 4-phosphate pathway involved in terpenoid biosynthetic process"/>
    <property type="evidence" value="ECO:0007669"/>
    <property type="project" value="TreeGrafter"/>
</dbReference>
<dbReference type="FunFam" id="3.40.50.720:FF:000045">
    <property type="entry name" value="1-deoxy-D-xylulose 5-phosphate reductoisomerase"/>
    <property type="match status" value="1"/>
</dbReference>
<dbReference type="Gene3D" id="1.10.1740.10">
    <property type="match status" value="1"/>
</dbReference>
<dbReference type="Gene3D" id="3.40.50.720">
    <property type="entry name" value="NAD(P)-binding Rossmann-like Domain"/>
    <property type="match status" value="1"/>
</dbReference>
<dbReference type="HAMAP" id="MF_00183">
    <property type="entry name" value="DXP_reductoisom"/>
    <property type="match status" value="1"/>
</dbReference>
<dbReference type="InterPro" id="IPR003821">
    <property type="entry name" value="DXP_reductoisomerase"/>
</dbReference>
<dbReference type="InterPro" id="IPR013644">
    <property type="entry name" value="DXP_reductoisomerase_C"/>
</dbReference>
<dbReference type="InterPro" id="IPR013512">
    <property type="entry name" value="DXP_reductoisomerase_N"/>
</dbReference>
<dbReference type="InterPro" id="IPR026877">
    <property type="entry name" value="DXPR_C"/>
</dbReference>
<dbReference type="InterPro" id="IPR036169">
    <property type="entry name" value="DXPR_C_sf"/>
</dbReference>
<dbReference type="InterPro" id="IPR036291">
    <property type="entry name" value="NAD(P)-bd_dom_sf"/>
</dbReference>
<dbReference type="NCBIfam" id="TIGR00243">
    <property type="entry name" value="Dxr"/>
    <property type="match status" value="1"/>
</dbReference>
<dbReference type="PANTHER" id="PTHR30525">
    <property type="entry name" value="1-DEOXY-D-XYLULOSE 5-PHOSPHATE REDUCTOISOMERASE"/>
    <property type="match status" value="1"/>
</dbReference>
<dbReference type="PANTHER" id="PTHR30525:SF0">
    <property type="entry name" value="1-DEOXY-D-XYLULOSE 5-PHOSPHATE REDUCTOISOMERASE, CHLOROPLASTIC"/>
    <property type="match status" value="1"/>
</dbReference>
<dbReference type="Pfam" id="PF08436">
    <property type="entry name" value="DXP_redisom_C"/>
    <property type="match status" value="1"/>
</dbReference>
<dbReference type="Pfam" id="PF02670">
    <property type="entry name" value="DXP_reductoisom"/>
    <property type="match status" value="1"/>
</dbReference>
<dbReference type="Pfam" id="PF13288">
    <property type="entry name" value="DXPR_C"/>
    <property type="match status" value="1"/>
</dbReference>
<dbReference type="PIRSF" id="PIRSF006205">
    <property type="entry name" value="Dxp_reductismrs"/>
    <property type="match status" value="1"/>
</dbReference>
<dbReference type="SUPFAM" id="SSF69055">
    <property type="entry name" value="1-deoxy-D-xylulose-5-phosphate reductoisomerase, C-terminal domain"/>
    <property type="match status" value="1"/>
</dbReference>
<dbReference type="SUPFAM" id="SSF55347">
    <property type="entry name" value="Glyceraldehyde-3-phosphate dehydrogenase-like, C-terminal domain"/>
    <property type="match status" value="1"/>
</dbReference>
<dbReference type="SUPFAM" id="SSF51735">
    <property type="entry name" value="NAD(P)-binding Rossmann-fold domains"/>
    <property type="match status" value="1"/>
</dbReference>
<feature type="chain" id="PRO_1000124114" description="1-deoxy-D-xylulose 5-phosphate reductoisomerase">
    <location>
        <begin position="1"/>
        <end position="375"/>
    </location>
</feature>
<feature type="binding site" evidence="1">
    <location>
        <position position="12"/>
    </location>
    <ligand>
        <name>NADPH</name>
        <dbReference type="ChEBI" id="CHEBI:57783"/>
    </ligand>
</feature>
<feature type="binding site" evidence="1">
    <location>
        <position position="13"/>
    </location>
    <ligand>
        <name>NADPH</name>
        <dbReference type="ChEBI" id="CHEBI:57783"/>
    </ligand>
</feature>
<feature type="binding site" evidence="1">
    <location>
        <position position="14"/>
    </location>
    <ligand>
        <name>NADPH</name>
        <dbReference type="ChEBI" id="CHEBI:57783"/>
    </ligand>
</feature>
<feature type="binding site" evidence="1">
    <location>
        <position position="15"/>
    </location>
    <ligand>
        <name>NADPH</name>
        <dbReference type="ChEBI" id="CHEBI:57783"/>
    </ligand>
</feature>
<feature type="binding site" evidence="1">
    <location>
        <position position="39"/>
    </location>
    <ligand>
        <name>NADPH</name>
        <dbReference type="ChEBI" id="CHEBI:57783"/>
    </ligand>
</feature>
<feature type="binding site" evidence="1">
    <location>
        <position position="115"/>
    </location>
    <ligand>
        <name>NADPH</name>
        <dbReference type="ChEBI" id="CHEBI:57783"/>
    </ligand>
</feature>
<feature type="binding site" evidence="1">
    <location>
        <position position="116"/>
    </location>
    <ligand>
        <name>1-deoxy-D-xylulose 5-phosphate</name>
        <dbReference type="ChEBI" id="CHEBI:57792"/>
    </ligand>
</feature>
<feature type="binding site" evidence="1">
    <location>
        <position position="117"/>
    </location>
    <ligand>
        <name>NADPH</name>
        <dbReference type="ChEBI" id="CHEBI:57783"/>
    </ligand>
</feature>
<feature type="binding site" evidence="1">
    <location>
        <position position="141"/>
    </location>
    <ligand>
        <name>Mn(2+)</name>
        <dbReference type="ChEBI" id="CHEBI:29035"/>
    </ligand>
</feature>
<feature type="binding site" evidence="1">
    <location>
        <position position="142"/>
    </location>
    <ligand>
        <name>1-deoxy-D-xylulose 5-phosphate</name>
        <dbReference type="ChEBI" id="CHEBI:57792"/>
    </ligand>
</feature>
<feature type="binding site" evidence="1">
    <location>
        <position position="143"/>
    </location>
    <ligand>
        <name>1-deoxy-D-xylulose 5-phosphate</name>
        <dbReference type="ChEBI" id="CHEBI:57792"/>
    </ligand>
</feature>
<feature type="binding site" evidence="1">
    <location>
        <position position="143"/>
    </location>
    <ligand>
        <name>Mn(2+)</name>
        <dbReference type="ChEBI" id="CHEBI:29035"/>
    </ligand>
</feature>
<feature type="binding site" evidence="1">
    <location>
        <position position="163"/>
    </location>
    <ligand>
        <name>1-deoxy-D-xylulose 5-phosphate</name>
        <dbReference type="ChEBI" id="CHEBI:57792"/>
    </ligand>
</feature>
<feature type="binding site" evidence="1">
    <location>
        <position position="186"/>
    </location>
    <ligand>
        <name>1-deoxy-D-xylulose 5-phosphate</name>
        <dbReference type="ChEBI" id="CHEBI:57792"/>
    </ligand>
</feature>
<feature type="binding site" evidence="1">
    <location>
        <position position="192"/>
    </location>
    <ligand>
        <name>NADPH</name>
        <dbReference type="ChEBI" id="CHEBI:57783"/>
    </ligand>
</feature>
<feature type="binding site" evidence="1">
    <location>
        <position position="199"/>
    </location>
    <ligand>
        <name>1-deoxy-D-xylulose 5-phosphate</name>
        <dbReference type="ChEBI" id="CHEBI:57792"/>
    </ligand>
</feature>
<feature type="binding site" evidence="1">
    <location>
        <position position="204"/>
    </location>
    <ligand>
        <name>1-deoxy-D-xylulose 5-phosphate</name>
        <dbReference type="ChEBI" id="CHEBI:57792"/>
    </ligand>
</feature>
<feature type="binding site" evidence="1">
    <location>
        <position position="205"/>
    </location>
    <ligand>
        <name>1-deoxy-D-xylulose 5-phosphate</name>
        <dbReference type="ChEBI" id="CHEBI:57792"/>
    </ligand>
</feature>
<feature type="binding site" evidence="1">
    <location>
        <position position="208"/>
    </location>
    <ligand>
        <name>1-deoxy-D-xylulose 5-phosphate</name>
        <dbReference type="ChEBI" id="CHEBI:57792"/>
    </ligand>
</feature>
<feature type="binding site" evidence="1">
    <location>
        <position position="208"/>
    </location>
    <ligand>
        <name>Mn(2+)</name>
        <dbReference type="ChEBI" id="CHEBI:29035"/>
    </ligand>
</feature>
<protein>
    <recommendedName>
        <fullName evidence="1">1-deoxy-D-xylulose 5-phosphate reductoisomerase</fullName>
        <shortName evidence="1">DXP reductoisomerase</shortName>
        <ecNumber evidence="1">1.1.1.267</ecNumber>
    </recommendedName>
    <alternativeName>
        <fullName evidence="1">1-deoxyxylulose-5-phosphate reductoisomerase</fullName>
    </alternativeName>
    <alternativeName>
        <fullName evidence="1">2-C-methyl-D-erythritol 4-phosphate synthase</fullName>
    </alternativeName>
</protein>
<proteinExistence type="inferred from homology"/>
<keyword id="KW-0414">Isoprene biosynthesis</keyword>
<keyword id="KW-0464">Manganese</keyword>
<keyword id="KW-0479">Metal-binding</keyword>
<keyword id="KW-0521">NADP</keyword>
<keyword id="KW-0560">Oxidoreductase</keyword>
<reference key="1">
    <citation type="submission" date="2007-11" db="EMBL/GenBank/DDBJ databases">
        <title>The genome sequence of the hyperthermophilic bacterium Thermotoga neapolitana.</title>
        <authorList>
            <person name="Lim S.K."/>
            <person name="Kim J.S."/>
            <person name="Cha S.H."/>
            <person name="Park B.C."/>
            <person name="Lee D.S."/>
            <person name="Tae H.S."/>
            <person name="Kim S.-J."/>
            <person name="Kim J.J."/>
            <person name="Park K.J."/>
            <person name="Lee S.Y."/>
        </authorList>
    </citation>
    <scope>NUCLEOTIDE SEQUENCE [LARGE SCALE GENOMIC DNA]</scope>
    <source>
        <strain>ATCC 49049 / DSM 4359 / NBRC 107923 / NS-E</strain>
    </source>
</reference>
<gene>
    <name evidence="1" type="primary">dxr</name>
    <name type="ordered locus">CTN_1687</name>
</gene>
<name>DXR_THENN</name>
<organism>
    <name type="scientific">Thermotoga neapolitana (strain ATCC 49049 / DSM 4359 / NBRC 107923 / NS-E)</name>
    <dbReference type="NCBI Taxonomy" id="309803"/>
    <lineage>
        <taxon>Bacteria</taxon>
        <taxon>Thermotogati</taxon>
        <taxon>Thermotogota</taxon>
        <taxon>Thermotogae</taxon>
        <taxon>Thermotogales</taxon>
        <taxon>Thermotogaceae</taxon>
        <taxon>Thermotoga</taxon>
    </lineage>
</organism>
<evidence type="ECO:0000255" key="1">
    <source>
        <dbReference type="HAMAP-Rule" id="MF_00183"/>
    </source>
</evidence>